<gene>
    <name type="primary">WWM1</name>
    <name type="ordered locus">YFL010C</name>
</gene>
<evidence type="ECO:0000255" key="1">
    <source>
        <dbReference type="PROSITE-ProRule" id="PRU00224"/>
    </source>
</evidence>
<evidence type="ECO:0000256" key="2">
    <source>
        <dbReference type="SAM" id="MobiDB-lite"/>
    </source>
</evidence>
<evidence type="ECO:0000269" key="3">
    <source>
    </source>
</evidence>
<evidence type="ECO:0000269" key="4">
    <source>
    </source>
</evidence>
<evidence type="ECO:0000269" key="5">
    <source>
    </source>
</evidence>
<evidence type="ECO:0000269" key="6">
    <source>
    </source>
</evidence>
<evidence type="ECO:0007744" key="7">
    <source>
    </source>
</evidence>
<evidence type="ECO:0007744" key="8">
    <source>
    </source>
</evidence>
<organism>
    <name type="scientific">Saccharomyces cerevisiae (strain ATCC 204508 / S288c)</name>
    <name type="common">Baker's yeast</name>
    <dbReference type="NCBI Taxonomy" id="559292"/>
    <lineage>
        <taxon>Eukaryota</taxon>
        <taxon>Fungi</taxon>
        <taxon>Dikarya</taxon>
        <taxon>Ascomycota</taxon>
        <taxon>Saccharomycotina</taxon>
        <taxon>Saccharomycetes</taxon>
        <taxon>Saccharomycetales</taxon>
        <taxon>Saccharomycetaceae</taxon>
        <taxon>Saccharomyces</taxon>
    </lineage>
</organism>
<protein>
    <recommendedName>
        <fullName>WW domain-containing protein WWM1</fullName>
    </recommendedName>
    <alternativeName>
        <fullName>WW domain-containing protein interacting with metacaspase</fullName>
    </alternativeName>
</protein>
<feature type="chain" id="PRO_0000076096" description="WW domain-containing protein WWM1">
    <location>
        <begin position="1"/>
        <end position="211"/>
    </location>
</feature>
<feature type="domain" description="WW" evidence="1">
    <location>
        <begin position="9"/>
        <end position="43"/>
    </location>
</feature>
<feature type="region of interest" description="Disordered" evidence="2">
    <location>
        <begin position="32"/>
        <end position="116"/>
    </location>
</feature>
<feature type="compositionally biased region" description="Low complexity" evidence="2">
    <location>
        <begin position="80"/>
        <end position="116"/>
    </location>
</feature>
<feature type="modified residue" description="Phosphoserine" evidence="7">
    <location>
        <position position="75"/>
    </location>
</feature>
<feature type="modified residue" description="Phosphothreonine" evidence="7">
    <location>
        <position position="78"/>
    </location>
</feature>
<feature type="cross-link" description="Glycyl lysine isopeptide (Lys-Gly) (interchain with G-Cter in ubiquitin)" evidence="8">
    <location>
        <position position="50"/>
    </location>
</feature>
<feature type="cross-link" description="Glycyl lysine isopeptide (Lys-Gly) (interchain with G-Cter in ubiquitin)" evidence="8">
    <location>
        <position position="60"/>
    </location>
</feature>
<dbReference type="EMBL" id="D50617">
    <property type="protein sequence ID" value="BAA09228.1"/>
    <property type="molecule type" value="Genomic_DNA"/>
</dbReference>
<dbReference type="EMBL" id="Z46255">
    <property type="protein sequence ID" value="CAA86342.1"/>
    <property type="molecule type" value="Genomic_DNA"/>
</dbReference>
<dbReference type="EMBL" id="BK006940">
    <property type="protein sequence ID" value="DAA12430.1"/>
    <property type="molecule type" value="Genomic_DNA"/>
</dbReference>
<dbReference type="PIR" id="S48311">
    <property type="entry name" value="S48311"/>
</dbReference>
<dbReference type="RefSeq" id="NP_570898.1">
    <property type="nucleotide sequence ID" value="NM_001179956.1"/>
</dbReference>
<dbReference type="SMR" id="P43582"/>
<dbReference type="BioGRID" id="31137">
    <property type="interactions" value="235"/>
</dbReference>
<dbReference type="DIP" id="DIP-3899N"/>
<dbReference type="FunCoup" id="P43582">
    <property type="interactions" value="102"/>
</dbReference>
<dbReference type="IntAct" id="P43582">
    <property type="interactions" value="63"/>
</dbReference>
<dbReference type="MINT" id="P43582"/>
<dbReference type="STRING" id="4932.YFL010C"/>
<dbReference type="GlyGen" id="P43582">
    <property type="glycosylation" value="1 site, 1 O-linked glycan (1 site)"/>
</dbReference>
<dbReference type="iPTMnet" id="P43582"/>
<dbReference type="PaxDb" id="4932-YFL010C"/>
<dbReference type="PeptideAtlas" id="P43582"/>
<dbReference type="EnsemblFungi" id="YFL010C_mRNA">
    <property type="protein sequence ID" value="YFL010C"/>
    <property type="gene ID" value="YFL010C"/>
</dbReference>
<dbReference type="GeneID" id="850538"/>
<dbReference type="KEGG" id="sce:YFL010C"/>
<dbReference type="AGR" id="SGD:S000001884"/>
<dbReference type="SGD" id="S000001884">
    <property type="gene designation" value="WWM1"/>
</dbReference>
<dbReference type="VEuPathDB" id="FungiDB:YFL010C"/>
<dbReference type="eggNOG" id="ENOG502S4J9">
    <property type="taxonomic scope" value="Eukaryota"/>
</dbReference>
<dbReference type="HOGENOM" id="CLU_091402_0_0_1"/>
<dbReference type="InParanoid" id="P43582"/>
<dbReference type="OMA" id="RWNDQYK"/>
<dbReference type="OrthoDB" id="2444812at2759"/>
<dbReference type="BioCyc" id="YEAST:G3O-30446-MONOMER"/>
<dbReference type="BioGRID-ORCS" id="850538">
    <property type="hits" value="8 hits in 10 CRISPR screens"/>
</dbReference>
<dbReference type="PRO" id="PR:P43582"/>
<dbReference type="Proteomes" id="UP000002311">
    <property type="component" value="Chromosome VI"/>
</dbReference>
<dbReference type="RNAct" id="P43582">
    <property type="molecule type" value="protein"/>
</dbReference>
<dbReference type="GO" id="GO:0005737">
    <property type="term" value="C:cytoplasm"/>
    <property type="evidence" value="ECO:0007005"/>
    <property type="project" value="SGD"/>
</dbReference>
<dbReference type="GO" id="GO:0005739">
    <property type="term" value="C:mitochondrion"/>
    <property type="evidence" value="ECO:0007005"/>
    <property type="project" value="SGD"/>
</dbReference>
<dbReference type="GO" id="GO:0005634">
    <property type="term" value="C:nucleus"/>
    <property type="evidence" value="ECO:0000314"/>
    <property type="project" value="SGD"/>
</dbReference>
<dbReference type="GO" id="GO:0006915">
    <property type="term" value="P:apoptotic process"/>
    <property type="evidence" value="ECO:0007669"/>
    <property type="project" value="UniProtKB-KW"/>
</dbReference>
<dbReference type="CDD" id="cd00201">
    <property type="entry name" value="WW"/>
    <property type="match status" value="1"/>
</dbReference>
<dbReference type="Gene3D" id="2.20.70.10">
    <property type="match status" value="1"/>
</dbReference>
<dbReference type="InterPro" id="IPR001202">
    <property type="entry name" value="WW_dom"/>
</dbReference>
<dbReference type="InterPro" id="IPR036020">
    <property type="entry name" value="WW_dom_sf"/>
</dbReference>
<dbReference type="Pfam" id="PF00397">
    <property type="entry name" value="WW"/>
    <property type="match status" value="1"/>
</dbReference>
<dbReference type="SMART" id="SM00456">
    <property type="entry name" value="WW"/>
    <property type="match status" value="1"/>
</dbReference>
<dbReference type="SUPFAM" id="SSF51045">
    <property type="entry name" value="WW domain"/>
    <property type="match status" value="1"/>
</dbReference>
<dbReference type="PROSITE" id="PS01159">
    <property type="entry name" value="WW_DOMAIN_1"/>
    <property type="match status" value="1"/>
</dbReference>
<dbReference type="PROSITE" id="PS50020">
    <property type="entry name" value="WW_DOMAIN_2"/>
    <property type="match status" value="1"/>
</dbReference>
<sequence>MAQSKSNPPQVPSGWKAVFDDEYQTWYYVDLSTNSSQWEPPRGTTWPRPKGPPPGVNNEKSSRQQADQAPPPYSSQSTPQVQAGAQAQQPRYYQPQQPQYPQYPQQQRYYPQQAPMPAAAPQQAYYGTAPSTSKGSGHGGAMMGGLLGVGAGLLGGAMLEHAFDDHNYDGPDTVVVENNYYGDDAGGSDGGFDDAGGFDGGFDDGFDGSDF</sequence>
<keyword id="KW-0053">Apoptosis</keyword>
<keyword id="KW-0963">Cytoplasm</keyword>
<keyword id="KW-1017">Isopeptide bond</keyword>
<keyword id="KW-0496">Mitochondrion</keyword>
<keyword id="KW-0539">Nucleus</keyword>
<keyword id="KW-0597">Phosphoprotein</keyword>
<keyword id="KW-1185">Reference proteome</keyword>
<keyword id="KW-0832">Ubl conjugation</keyword>
<name>WWM1_YEAST</name>
<accession>P43582</accession>
<accession>D6VTM0</accession>
<comment type="function">
    <text evidence="4 5">Involved in apoptosis. May play a role in nuclear function controlling cellular proliferation coupled to mitochondrial biogenesis. Causes impaired growth when overexpressed.</text>
</comment>
<comment type="subunit">
    <text evidence="3">Interacts with metacaspase MCA1.</text>
</comment>
<comment type="subcellular location">
    <subcellularLocation>
        <location>Cytoplasm</location>
    </subcellularLocation>
    <subcellularLocation>
        <location>Nucleus</location>
    </subcellularLocation>
    <subcellularLocation>
        <location>Mitochondrion</location>
    </subcellularLocation>
</comment>
<comment type="miscellaneous">
    <text evidence="6">Present with 6020 molecules/cell in log phase SD medium.</text>
</comment>
<proteinExistence type="evidence at protein level"/>
<reference key="1">
    <citation type="journal article" date="1995" name="Nat. Genet.">
        <title>Analysis of the nucleotide sequence of chromosome VI from Saccharomyces cerevisiae.</title>
        <authorList>
            <person name="Murakami Y."/>
            <person name="Naitou M."/>
            <person name="Hagiwara H."/>
            <person name="Shibata T."/>
            <person name="Ozawa M."/>
            <person name="Sasanuma S."/>
            <person name="Sasanuma M."/>
            <person name="Tsuchiya Y."/>
            <person name="Soeda E."/>
            <person name="Yokoyama K."/>
            <person name="Yamazaki M."/>
            <person name="Tashiro H."/>
            <person name="Eki T."/>
        </authorList>
    </citation>
    <scope>NUCLEOTIDE SEQUENCE [LARGE SCALE GENOMIC DNA]</scope>
    <source>
        <strain>ATCC 204508 / S288c</strain>
    </source>
</reference>
<reference key="2">
    <citation type="journal article" date="2014" name="G3 (Bethesda)">
        <title>The reference genome sequence of Saccharomyces cerevisiae: Then and now.</title>
        <authorList>
            <person name="Engel S.R."/>
            <person name="Dietrich F.S."/>
            <person name="Fisk D.G."/>
            <person name="Binkley G."/>
            <person name="Balakrishnan R."/>
            <person name="Costanzo M.C."/>
            <person name="Dwight S.S."/>
            <person name="Hitz B.C."/>
            <person name="Karra K."/>
            <person name="Nash R.S."/>
            <person name="Weng S."/>
            <person name="Wong E.D."/>
            <person name="Lloyd P."/>
            <person name="Skrzypek M.S."/>
            <person name="Miyasato S.R."/>
            <person name="Simison M."/>
            <person name="Cherry J.M."/>
        </authorList>
    </citation>
    <scope>GENOME REANNOTATION</scope>
    <source>
        <strain>ATCC 204508 / S288c</strain>
    </source>
</reference>
<reference key="3">
    <citation type="submission" date="1994-09" db="EMBL/GenBank/DDBJ databases">
        <authorList>
            <person name="Barrell B.G."/>
            <person name="Churcher C."/>
            <person name="Rajandream M.A."/>
        </authorList>
    </citation>
    <scope>NUCLEOTIDE SEQUENCE [GENOMIC DNA]</scope>
    <source>
        <strain>ATCC 204511 / S288c / AB972</strain>
    </source>
</reference>
<reference key="4">
    <citation type="journal article" date="2000" name="Nature">
        <title>A comprehensive analysis of protein-protein interactions in Saccharomyces cerevisiae.</title>
        <authorList>
            <person name="Uetz P."/>
            <person name="Giot L."/>
            <person name="Cagney G."/>
            <person name="Mansfield T.A."/>
            <person name="Judson R.S."/>
            <person name="Knight J.R."/>
            <person name="Lockshon D."/>
            <person name="Narayan V."/>
            <person name="Srinivasan M."/>
            <person name="Pochart P."/>
            <person name="Qureshi-Emili A."/>
            <person name="Li Y."/>
            <person name="Godwin B."/>
            <person name="Conover D."/>
            <person name="Kalbfleisch T."/>
            <person name="Vijayadamodar G."/>
            <person name="Yang M."/>
            <person name="Johnston M."/>
            <person name="Fields S."/>
            <person name="Rothberg J.M."/>
        </authorList>
    </citation>
    <scope>INTERACTION WITH MCA1</scope>
</reference>
<reference key="5">
    <citation type="journal article" date="2001" name="Proc. Natl. Acad. Sci. U.S.A.">
        <title>A large-scale overexpression screen in Saccharomyces cerevisiae identifies previously uncharacterized cell cycle genes.</title>
        <authorList>
            <person name="Stevenson L.F."/>
            <person name="Kennedy B.K."/>
            <person name="Harlow E."/>
        </authorList>
    </citation>
    <scope>FUNCTION</scope>
</reference>
<reference key="6">
    <citation type="journal article" date="2002" name="FEBS Lett.">
        <title>A metacaspase of Trypanosoma brucei causes loss of respiration competence and clonal death in the yeast Saccharomyces cerevisiae.</title>
        <authorList>
            <person name="Szallies A."/>
            <person name="Kubata B.K."/>
            <person name="Duszenko M."/>
        </authorList>
    </citation>
    <scope>SUBCELLULAR LOCATION</scope>
    <scope>FUNCTION</scope>
</reference>
<reference key="7">
    <citation type="journal article" date="2003" name="Nature">
        <title>Global analysis of protein localization in budding yeast.</title>
        <authorList>
            <person name="Huh W.-K."/>
            <person name="Falvo J.V."/>
            <person name="Gerke L.C."/>
            <person name="Carroll A.S."/>
            <person name="Howson R.W."/>
            <person name="Weissman J.S."/>
            <person name="O'Shea E.K."/>
        </authorList>
    </citation>
    <scope>SUBCELLULAR LOCATION [LARGE SCALE ANALYSIS]</scope>
</reference>
<reference key="8">
    <citation type="journal article" date="2003" name="Nature">
        <title>Global analysis of protein expression in yeast.</title>
        <authorList>
            <person name="Ghaemmaghami S."/>
            <person name="Huh W.-K."/>
            <person name="Bower K."/>
            <person name="Howson R.W."/>
            <person name="Belle A."/>
            <person name="Dephoure N."/>
            <person name="O'Shea E.K."/>
            <person name="Weissman J.S."/>
        </authorList>
    </citation>
    <scope>LEVEL OF PROTEIN EXPRESSION [LARGE SCALE ANALYSIS]</scope>
</reference>
<reference key="9">
    <citation type="journal article" date="2003" name="Proc. Natl. Acad. Sci. U.S.A.">
        <title>The proteome of Saccharomyces cerevisiae mitochondria.</title>
        <authorList>
            <person name="Sickmann A."/>
            <person name="Reinders J."/>
            <person name="Wagner Y."/>
            <person name="Joppich C."/>
            <person name="Zahedi R.P."/>
            <person name="Meyer H.E."/>
            <person name="Schoenfisch B."/>
            <person name="Perschil I."/>
            <person name="Chacinska A."/>
            <person name="Guiard B."/>
            <person name="Rehling P."/>
            <person name="Pfanner N."/>
            <person name="Meisinger C."/>
        </authorList>
    </citation>
    <scope>SUBCELLULAR LOCATION [LARGE SCALE ANALYSIS]</scope>
    <source>
        <strain>ATCC 76625 / YPH499</strain>
    </source>
</reference>
<reference key="10">
    <citation type="journal article" date="2006" name="Genome Biol.">
        <title>Comparative analysis of Saccharomyces cerevisiae WW domains and their interacting proteins.</title>
        <authorList>
            <person name="Hesselberth J.R."/>
            <person name="Miller J.P."/>
            <person name="Golob A."/>
            <person name="Stajich J.E."/>
            <person name="Michaud G.A."/>
            <person name="Fields S."/>
        </authorList>
    </citation>
    <scope>DOMAIN</scope>
</reference>
<reference key="11">
    <citation type="journal article" date="2009" name="Science">
        <title>Global analysis of Cdk1 substrate phosphorylation sites provides insights into evolution.</title>
        <authorList>
            <person name="Holt L.J."/>
            <person name="Tuch B.B."/>
            <person name="Villen J."/>
            <person name="Johnson A.D."/>
            <person name="Gygi S.P."/>
            <person name="Morgan D.O."/>
        </authorList>
    </citation>
    <scope>PHOSPHORYLATION [LARGE SCALE ANALYSIS] AT SER-75 AND THR-78</scope>
    <scope>IDENTIFICATION BY MASS SPECTROMETRY [LARGE SCALE ANALYSIS]</scope>
</reference>
<reference key="12">
    <citation type="journal article" date="2012" name="Proteomics">
        <title>Sites of ubiquitin attachment in Saccharomyces cerevisiae.</title>
        <authorList>
            <person name="Starita L.M."/>
            <person name="Lo R.S."/>
            <person name="Eng J.K."/>
            <person name="von Haller P.D."/>
            <person name="Fields S."/>
        </authorList>
    </citation>
    <scope>UBIQUITINATION [LARGE SCALE ANALYSIS] AT LYS-50 AND LYS-60</scope>
    <scope>IDENTIFICATION BY MASS SPECTROMETRY [LARGE SCALE ANALYSIS]</scope>
</reference>